<sequence>MRSRKSSRAEAPGLPTDRQLGLSWDVPGLLAGVDEAGRGPLAGPVVAAAVILDDVQPIRGLGDSKVLSERVRERLFDEIRAKALCCCIAEASVEEIDTLNILQATLLAMRRAVAGLRLRPNKVLVDGNRLPVLQVPAEAIVKGDAKVAAISAASILAKVHRDRLCLALHEAHPQYGFAGHKGYPTPDHLAALRVHGACGAHRRSFAPVREVLLERRP</sequence>
<evidence type="ECO:0000255" key="1">
    <source>
        <dbReference type="HAMAP-Rule" id="MF_00052"/>
    </source>
</evidence>
<evidence type="ECO:0000255" key="2">
    <source>
        <dbReference type="PROSITE-ProRule" id="PRU01319"/>
    </source>
</evidence>
<organism>
    <name type="scientific">Methylibium petroleiphilum (strain ATCC BAA-1232 / LMG 22953 / PM1)</name>
    <dbReference type="NCBI Taxonomy" id="420662"/>
    <lineage>
        <taxon>Bacteria</taxon>
        <taxon>Pseudomonadati</taxon>
        <taxon>Pseudomonadota</taxon>
        <taxon>Betaproteobacteria</taxon>
        <taxon>Burkholderiales</taxon>
        <taxon>Sphaerotilaceae</taxon>
        <taxon>Methylibium</taxon>
    </lineage>
</organism>
<keyword id="KW-0963">Cytoplasm</keyword>
<keyword id="KW-0255">Endonuclease</keyword>
<keyword id="KW-0378">Hydrolase</keyword>
<keyword id="KW-0464">Manganese</keyword>
<keyword id="KW-0479">Metal-binding</keyword>
<keyword id="KW-0540">Nuclease</keyword>
<keyword id="KW-1185">Reference proteome</keyword>
<reference key="1">
    <citation type="journal article" date="2007" name="J. Bacteriol.">
        <title>Whole-genome analysis of the methyl tert-butyl ether-degrading beta-proteobacterium Methylibium petroleiphilum PM1.</title>
        <authorList>
            <person name="Kane S.R."/>
            <person name="Chakicherla A.Y."/>
            <person name="Chain P.S.G."/>
            <person name="Schmidt R."/>
            <person name="Shin M.W."/>
            <person name="Legler T.C."/>
            <person name="Scow K.M."/>
            <person name="Larimer F.W."/>
            <person name="Lucas S.M."/>
            <person name="Richardson P.M."/>
            <person name="Hristova K.R."/>
        </authorList>
    </citation>
    <scope>NUCLEOTIDE SEQUENCE [LARGE SCALE GENOMIC DNA]</scope>
    <source>
        <strain>ATCC BAA-1232 / LMG 22953 / PM1</strain>
    </source>
</reference>
<protein>
    <recommendedName>
        <fullName evidence="1">Ribonuclease HII 2</fullName>
        <shortName evidence="1">RNase HII 2</shortName>
        <ecNumber evidence="1">3.1.26.4</ecNumber>
    </recommendedName>
</protein>
<feature type="chain" id="PRO_0000334921" description="Ribonuclease HII 2">
    <location>
        <begin position="1"/>
        <end position="217"/>
    </location>
</feature>
<feature type="domain" description="RNase H type-2" evidence="2">
    <location>
        <begin position="28"/>
        <end position="217"/>
    </location>
</feature>
<feature type="binding site" evidence="1">
    <location>
        <position position="34"/>
    </location>
    <ligand>
        <name>a divalent metal cation</name>
        <dbReference type="ChEBI" id="CHEBI:60240"/>
    </ligand>
</feature>
<feature type="binding site" evidence="1">
    <location>
        <position position="35"/>
    </location>
    <ligand>
        <name>a divalent metal cation</name>
        <dbReference type="ChEBI" id="CHEBI:60240"/>
    </ligand>
</feature>
<feature type="binding site" evidence="1">
    <location>
        <position position="126"/>
    </location>
    <ligand>
        <name>a divalent metal cation</name>
        <dbReference type="ChEBI" id="CHEBI:60240"/>
    </ligand>
</feature>
<name>RNH22_METPP</name>
<accession>A2SH85</accession>
<dbReference type="EC" id="3.1.26.4" evidence="1"/>
<dbReference type="EMBL" id="CP000555">
    <property type="protein sequence ID" value="ABM94924.1"/>
    <property type="molecule type" value="Genomic_DNA"/>
</dbReference>
<dbReference type="RefSeq" id="WP_011829561.1">
    <property type="nucleotide sequence ID" value="NC_008825.1"/>
</dbReference>
<dbReference type="SMR" id="A2SH85"/>
<dbReference type="STRING" id="420662.Mpe_A1966"/>
<dbReference type="KEGG" id="mpt:Mpe_A1966"/>
<dbReference type="eggNOG" id="COG0164">
    <property type="taxonomic scope" value="Bacteria"/>
</dbReference>
<dbReference type="HOGENOM" id="CLU_036532_3_2_4"/>
<dbReference type="Proteomes" id="UP000000366">
    <property type="component" value="Chromosome"/>
</dbReference>
<dbReference type="GO" id="GO:0005737">
    <property type="term" value="C:cytoplasm"/>
    <property type="evidence" value="ECO:0007669"/>
    <property type="project" value="UniProtKB-SubCell"/>
</dbReference>
<dbReference type="GO" id="GO:0032299">
    <property type="term" value="C:ribonuclease H2 complex"/>
    <property type="evidence" value="ECO:0007669"/>
    <property type="project" value="TreeGrafter"/>
</dbReference>
<dbReference type="GO" id="GO:0030145">
    <property type="term" value="F:manganese ion binding"/>
    <property type="evidence" value="ECO:0007669"/>
    <property type="project" value="UniProtKB-UniRule"/>
</dbReference>
<dbReference type="GO" id="GO:0003723">
    <property type="term" value="F:RNA binding"/>
    <property type="evidence" value="ECO:0007669"/>
    <property type="project" value="InterPro"/>
</dbReference>
<dbReference type="GO" id="GO:0004523">
    <property type="term" value="F:RNA-DNA hybrid ribonuclease activity"/>
    <property type="evidence" value="ECO:0007669"/>
    <property type="project" value="UniProtKB-UniRule"/>
</dbReference>
<dbReference type="GO" id="GO:0043137">
    <property type="term" value="P:DNA replication, removal of RNA primer"/>
    <property type="evidence" value="ECO:0007669"/>
    <property type="project" value="TreeGrafter"/>
</dbReference>
<dbReference type="GO" id="GO:0006298">
    <property type="term" value="P:mismatch repair"/>
    <property type="evidence" value="ECO:0007669"/>
    <property type="project" value="TreeGrafter"/>
</dbReference>
<dbReference type="CDD" id="cd07182">
    <property type="entry name" value="RNase_HII_bacteria_HII_like"/>
    <property type="match status" value="1"/>
</dbReference>
<dbReference type="FunFam" id="3.30.420.10:FF:000006">
    <property type="entry name" value="Ribonuclease HII"/>
    <property type="match status" value="1"/>
</dbReference>
<dbReference type="Gene3D" id="3.30.420.10">
    <property type="entry name" value="Ribonuclease H-like superfamily/Ribonuclease H"/>
    <property type="match status" value="1"/>
</dbReference>
<dbReference type="HAMAP" id="MF_00052_B">
    <property type="entry name" value="RNase_HII_B"/>
    <property type="match status" value="1"/>
</dbReference>
<dbReference type="InterPro" id="IPR022898">
    <property type="entry name" value="RNase_HII"/>
</dbReference>
<dbReference type="InterPro" id="IPR001352">
    <property type="entry name" value="RNase_HII/HIII"/>
</dbReference>
<dbReference type="InterPro" id="IPR024567">
    <property type="entry name" value="RNase_HII/HIII_dom"/>
</dbReference>
<dbReference type="InterPro" id="IPR012337">
    <property type="entry name" value="RNaseH-like_sf"/>
</dbReference>
<dbReference type="InterPro" id="IPR036397">
    <property type="entry name" value="RNaseH_sf"/>
</dbReference>
<dbReference type="NCBIfam" id="NF000595">
    <property type="entry name" value="PRK00015.1-3"/>
    <property type="match status" value="1"/>
</dbReference>
<dbReference type="NCBIfam" id="NF000596">
    <property type="entry name" value="PRK00015.1-4"/>
    <property type="match status" value="1"/>
</dbReference>
<dbReference type="PANTHER" id="PTHR10954">
    <property type="entry name" value="RIBONUCLEASE H2 SUBUNIT A"/>
    <property type="match status" value="1"/>
</dbReference>
<dbReference type="PANTHER" id="PTHR10954:SF18">
    <property type="entry name" value="RIBONUCLEASE HII"/>
    <property type="match status" value="1"/>
</dbReference>
<dbReference type="Pfam" id="PF01351">
    <property type="entry name" value="RNase_HII"/>
    <property type="match status" value="1"/>
</dbReference>
<dbReference type="SUPFAM" id="SSF53098">
    <property type="entry name" value="Ribonuclease H-like"/>
    <property type="match status" value="1"/>
</dbReference>
<dbReference type="PROSITE" id="PS51975">
    <property type="entry name" value="RNASE_H_2"/>
    <property type="match status" value="1"/>
</dbReference>
<comment type="function">
    <text evidence="1">Endonuclease that specifically degrades the RNA of RNA-DNA hybrids.</text>
</comment>
<comment type="catalytic activity">
    <reaction evidence="1">
        <text>Endonucleolytic cleavage to 5'-phosphomonoester.</text>
        <dbReference type="EC" id="3.1.26.4"/>
    </reaction>
</comment>
<comment type="cofactor">
    <cofactor evidence="1">
        <name>Mn(2+)</name>
        <dbReference type="ChEBI" id="CHEBI:29035"/>
    </cofactor>
    <cofactor evidence="1">
        <name>Mg(2+)</name>
        <dbReference type="ChEBI" id="CHEBI:18420"/>
    </cofactor>
    <text evidence="1">Manganese or magnesium. Binds 1 divalent metal ion per monomer in the absence of substrate. May bind a second metal ion after substrate binding.</text>
</comment>
<comment type="subcellular location">
    <subcellularLocation>
        <location evidence="1">Cytoplasm</location>
    </subcellularLocation>
</comment>
<comment type="similarity">
    <text evidence="1">Belongs to the RNase HII family.</text>
</comment>
<gene>
    <name evidence="1" type="primary">rnhB2</name>
    <name type="ordered locus">Mpe_A1966</name>
</gene>
<proteinExistence type="inferred from homology"/>